<reference evidence="6" key="1">
    <citation type="journal article" date="2012" name="Peptides">
        <title>Characterization of diverse antimicrobial peptides in skin secretions of Chungan torrent frog Amolops chunganensis.</title>
        <authorList>
            <person name="Yang X."/>
            <person name="Xia J."/>
            <person name="Yu Z."/>
            <person name="Hu Y."/>
            <person name="Li F."/>
            <person name="Meng H."/>
            <person name="Yang S."/>
            <person name="Liu J."/>
            <person name="Wang H."/>
        </authorList>
    </citation>
    <scope>NUCLEOTIDE SEQUENCE [MRNA]</scope>
    <scope>FUNCTION</scope>
    <scope>SYNTHESIS</scope>
    <source>
        <tissue evidence="3">Skin secretion</tissue>
    </source>
</reference>
<keyword id="KW-0878">Amphibian defense peptide</keyword>
<keyword id="KW-0044">Antibiotic</keyword>
<keyword id="KW-0929">Antimicrobial</keyword>
<keyword id="KW-0165">Cleavage on pair of basic residues</keyword>
<keyword id="KW-0204">Cytolysis</keyword>
<keyword id="KW-0295">Fungicide</keyword>
<keyword id="KW-0354">Hemolysis</keyword>
<keyword id="KW-0964">Secreted</keyword>
<keyword id="KW-0732">Signal</keyword>
<dbReference type="EMBL" id="HQ009836">
    <property type="protein sequence ID" value="ADM34212.1"/>
    <property type="molecule type" value="mRNA"/>
</dbReference>
<dbReference type="GO" id="GO:0005576">
    <property type="term" value="C:extracellular region"/>
    <property type="evidence" value="ECO:0007669"/>
    <property type="project" value="UniProtKB-SubCell"/>
</dbReference>
<dbReference type="GO" id="GO:0042742">
    <property type="term" value="P:defense response to bacterium"/>
    <property type="evidence" value="ECO:0007669"/>
    <property type="project" value="UniProtKB-KW"/>
</dbReference>
<dbReference type="GO" id="GO:0050832">
    <property type="term" value="P:defense response to fungus"/>
    <property type="evidence" value="ECO:0007669"/>
    <property type="project" value="UniProtKB-KW"/>
</dbReference>
<dbReference type="GO" id="GO:0031640">
    <property type="term" value="P:killing of cells of another organism"/>
    <property type="evidence" value="ECO:0007669"/>
    <property type="project" value="UniProtKB-KW"/>
</dbReference>
<dbReference type="InterPro" id="IPR004275">
    <property type="entry name" value="Frog_antimicrobial_propeptide"/>
</dbReference>
<dbReference type="Pfam" id="PF03032">
    <property type="entry name" value="FSAP_sig_propep"/>
    <property type="match status" value="1"/>
</dbReference>
<evidence type="ECO:0000255" key="1"/>
<evidence type="ECO:0000269" key="2">
    <source>
    </source>
</evidence>
<evidence type="ECO:0000303" key="3">
    <source>
    </source>
</evidence>
<evidence type="ECO:0000305" key="4"/>
<evidence type="ECO:0000305" key="5">
    <source>
    </source>
</evidence>
<evidence type="ECO:0000312" key="6">
    <source>
        <dbReference type="EMBL" id="ADM34212.1"/>
    </source>
</evidence>
<accession>E1AWE0</accession>
<protein>
    <recommendedName>
        <fullName evidence="3">Temporin-CG3</fullName>
    </recommendedName>
</protein>
<name>TP3_AMOCU</name>
<sequence>MFTMKKPLLLLFFLATINLSLCEQERNAEEERRDEPDERNAEVEKRFLPIVGKLLSGLFGK</sequence>
<comment type="function">
    <text evidence="2">Antimicrobial peptide active against a variety of Gram-positive bacterial strains but not against Gram-negative bacteria. Has weak antifungal activity against a slime mold isolate. Has weak hemolytic activity against human erythrocytes.</text>
</comment>
<comment type="subcellular location">
    <subcellularLocation>
        <location evidence="5">Secreted</location>
    </subcellularLocation>
</comment>
<comment type="tissue specificity">
    <text evidence="5">Expressed by the skin glands.</text>
</comment>
<comment type="similarity">
    <text evidence="4">Belongs to the frog skin active peptide (FSAP) family. Temporin subfamily.</text>
</comment>
<proteinExistence type="inferred from homology"/>
<organism evidence="3">
    <name type="scientific">Amolops chunganensis</name>
    <name type="common">Chungan torrent frog</name>
    <name type="synonym">Hylorana chunganensis</name>
    <dbReference type="NCBI Taxonomy" id="325556"/>
    <lineage>
        <taxon>Eukaryota</taxon>
        <taxon>Metazoa</taxon>
        <taxon>Chordata</taxon>
        <taxon>Craniata</taxon>
        <taxon>Vertebrata</taxon>
        <taxon>Euteleostomi</taxon>
        <taxon>Amphibia</taxon>
        <taxon>Batrachia</taxon>
        <taxon>Anura</taxon>
        <taxon>Neobatrachia</taxon>
        <taxon>Ranoidea</taxon>
        <taxon>Ranidae</taxon>
        <taxon>Amolops</taxon>
    </lineage>
</organism>
<feature type="signal peptide" evidence="1">
    <location>
        <begin position="1"/>
        <end position="22"/>
    </location>
</feature>
<feature type="propeptide" id="PRO_0000439744" description="Removed in mature form" evidence="5">
    <location>
        <begin position="23"/>
        <end position="44"/>
    </location>
</feature>
<feature type="peptide" id="PRO_0000439745" description="Temporin-CG3" evidence="3">
    <location>
        <begin position="47"/>
        <end position="61"/>
    </location>
</feature>